<evidence type="ECO:0000255" key="1">
    <source>
        <dbReference type="HAMAP-Rule" id="MF_01398"/>
    </source>
</evidence>
<comment type="function">
    <text evidence="1">F(1)F(0) ATP synthase produces ATP from ADP in the presence of a proton or sodium gradient. F-type ATPases consist of two structural domains, F(1) containing the extramembraneous catalytic core and F(0) containing the membrane proton channel, linked together by a central stalk and a peripheral stalk. During catalysis, ATP synthesis in the catalytic domain of F(1) is coupled via a rotary mechanism of the central stalk subunits to proton translocation.</text>
</comment>
<comment type="function">
    <text evidence="1">Component of the F(0) channel, it forms part of the peripheral stalk, linking F(1) to F(0).</text>
</comment>
<comment type="subunit">
    <text evidence="1">F-type ATPases have 2 components, F(1) - the catalytic core - and F(0) - the membrane proton channel. F(1) has five subunits: alpha(3), beta(3), gamma(1), delta(1), epsilon(1). F(0) has three main subunits: a(1), b(2) and c(10-14). The alpha and beta chains form an alternating ring which encloses part of the gamma chain. F(1) is attached to F(0) by a central stalk formed by the gamma and epsilon chains, while a peripheral stalk is formed by the delta and b chains.</text>
</comment>
<comment type="subcellular location">
    <subcellularLocation>
        <location evidence="1">Cell inner membrane</location>
        <topology evidence="1">Single-pass membrane protein</topology>
    </subcellularLocation>
</comment>
<comment type="similarity">
    <text evidence="1">Belongs to the ATPase B chain family.</text>
</comment>
<name>ATPF_SHEFN</name>
<gene>
    <name evidence="1" type="primary">atpF</name>
    <name type="ordered locus">Sfri_4049</name>
</gene>
<keyword id="KW-0066">ATP synthesis</keyword>
<keyword id="KW-0997">Cell inner membrane</keyword>
<keyword id="KW-1003">Cell membrane</keyword>
<keyword id="KW-0138">CF(0)</keyword>
<keyword id="KW-0375">Hydrogen ion transport</keyword>
<keyword id="KW-0406">Ion transport</keyword>
<keyword id="KW-0472">Membrane</keyword>
<keyword id="KW-1185">Reference proteome</keyword>
<keyword id="KW-0812">Transmembrane</keyword>
<keyword id="KW-1133">Transmembrane helix</keyword>
<keyword id="KW-0813">Transport</keyword>
<accession>Q07VU0</accession>
<sequence length="156" mass="17497">MNFNATLFGQTVAFILFVWFCMKFVWPPLMNAIEERQKKIADGLADAGRAAKDLELAQIKATEQLKEAKVTANEIIEQANKRKAQIVEEAKVEAQTERAKIIAQGQAEIENERNRVKDDLRKQVALLAIAGAEKILERTIDPEAHSDIVNKLVAEI</sequence>
<protein>
    <recommendedName>
        <fullName evidence="1">ATP synthase subunit b</fullName>
    </recommendedName>
    <alternativeName>
        <fullName evidence="1">ATP synthase F(0) sector subunit b</fullName>
    </alternativeName>
    <alternativeName>
        <fullName evidence="1">ATPase subunit I</fullName>
    </alternativeName>
    <alternativeName>
        <fullName evidence="1">F-type ATPase subunit b</fullName>
        <shortName evidence="1">F-ATPase subunit b</shortName>
    </alternativeName>
</protein>
<proteinExistence type="inferred from homology"/>
<feature type="chain" id="PRO_0000368758" description="ATP synthase subunit b">
    <location>
        <begin position="1"/>
        <end position="156"/>
    </location>
</feature>
<feature type="transmembrane region" description="Helical" evidence="1">
    <location>
        <begin position="7"/>
        <end position="29"/>
    </location>
</feature>
<reference key="1">
    <citation type="submission" date="2006-08" db="EMBL/GenBank/DDBJ databases">
        <title>Complete sequence of Shewanella frigidimarina NCIMB 400.</title>
        <authorList>
            <consortium name="US DOE Joint Genome Institute"/>
            <person name="Copeland A."/>
            <person name="Lucas S."/>
            <person name="Lapidus A."/>
            <person name="Barry K."/>
            <person name="Detter J.C."/>
            <person name="Glavina del Rio T."/>
            <person name="Hammon N."/>
            <person name="Israni S."/>
            <person name="Dalin E."/>
            <person name="Tice H."/>
            <person name="Pitluck S."/>
            <person name="Fredrickson J.K."/>
            <person name="Kolker E."/>
            <person name="McCuel L.A."/>
            <person name="DiChristina T."/>
            <person name="Nealson K.H."/>
            <person name="Newman D."/>
            <person name="Tiedje J.M."/>
            <person name="Zhou J."/>
            <person name="Romine M.F."/>
            <person name="Culley D.E."/>
            <person name="Serres M."/>
            <person name="Chertkov O."/>
            <person name="Brettin T."/>
            <person name="Bruce D."/>
            <person name="Han C."/>
            <person name="Tapia R."/>
            <person name="Gilna P."/>
            <person name="Schmutz J."/>
            <person name="Larimer F."/>
            <person name="Land M."/>
            <person name="Hauser L."/>
            <person name="Kyrpides N."/>
            <person name="Mikhailova N."/>
            <person name="Richardson P."/>
        </authorList>
    </citation>
    <scope>NUCLEOTIDE SEQUENCE [LARGE SCALE GENOMIC DNA]</scope>
    <source>
        <strain>NCIMB 400</strain>
    </source>
</reference>
<dbReference type="EMBL" id="CP000447">
    <property type="protein sequence ID" value="ABI73874.1"/>
    <property type="molecule type" value="Genomic_DNA"/>
</dbReference>
<dbReference type="RefSeq" id="WP_011639454.1">
    <property type="nucleotide sequence ID" value="NC_008345.1"/>
</dbReference>
<dbReference type="SMR" id="Q07VU0"/>
<dbReference type="STRING" id="318167.Sfri_4049"/>
<dbReference type="KEGG" id="sfr:Sfri_4049"/>
<dbReference type="eggNOG" id="COG0711">
    <property type="taxonomic scope" value="Bacteria"/>
</dbReference>
<dbReference type="HOGENOM" id="CLU_079215_4_5_6"/>
<dbReference type="OrthoDB" id="9788020at2"/>
<dbReference type="Proteomes" id="UP000000684">
    <property type="component" value="Chromosome"/>
</dbReference>
<dbReference type="GO" id="GO:0005886">
    <property type="term" value="C:plasma membrane"/>
    <property type="evidence" value="ECO:0007669"/>
    <property type="project" value="UniProtKB-SubCell"/>
</dbReference>
<dbReference type="GO" id="GO:0045259">
    <property type="term" value="C:proton-transporting ATP synthase complex"/>
    <property type="evidence" value="ECO:0007669"/>
    <property type="project" value="UniProtKB-KW"/>
</dbReference>
<dbReference type="GO" id="GO:0046933">
    <property type="term" value="F:proton-transporting ATP synthase activity, rotational mechanism"/>
    <property type="evidence" value="ECO:0007669"/>
    <property type="project" value="UniProtKB-UniRule"/>
</dbReference>
<dbReference type="GO" id="GO:0046961">
    <property type="term" value="F:proton-transporting ATPase activity, rotational mechanism"/>
    <property type="evidence" value="ECO:0007669"/>
    <property type="project" value="TreeGrafter"/>
</dbReference>
<dbReference type="CDD" id="cd06503">
    <property type="entry name" value="ATP-synt_Fo_b"/>
    <property type="match status" value="1"/>
</dbReference>
<dbReference type="FunFam" id="1.20.5.620:FF:000001">
    <property type="entry name" value="ATP synthase subunit b"/>
    <property type="match status" value="1"/>
</dbReference>
<dbReference type="Gene3D" id="1.20.5.620">
    <property type="entry name" value="F1F0 ATP synthase subunit B, membrane domain"/>
    <property type="match status" value="1"/>
</dbReference>
<dbReference type="HAMAP" id="MF_01398">
    <property type="entry name" value="ATP_synth_b_bprime"/>
    <property type="match status" value="1"/>
</dbReference>
<dbReference type="InterPro" id="IPR028987">
    <property type="entry name" value="ATP_synth_B-like_membr_sf"/>
</dbReference>
<dbReference type="InterPro" id="IPR002146">
    <property type="entry name" value="ATP_synth_b/b'su_bac/chlpt"/>
</dbReference>
<dbReference type="InterPro" id="IPR005864">
    <property type="entry name" value="ATP_synth_F0_bsu_bac"/>
</dbReference>
<dbReference type="InterPro" id="IPR050059">
    <property type="entry name" value="ATP_synthase_B_chain"/>
</dbReference>
<dbReference type="NCBIfam" id="TIGR01144">
    <property type="entry name" value="ATP_synt_b"/>
    <property type="match status" value="1"/>
</dbReference>
<dbReference type="NCBIfam" id="NF004411">
    <property type="entry name" value="PRK05759.1-2"/>
    <property type="match status" value="1"/>
</dbReference>
<dbReference type="NCBIfam" id="NF004413">
    <property type="entry name" value="PRK05759.1-4"/>
    <property type="match status" value="1"/>
</dbReference>
<dbReference type="PANTHER" id="PTHR33445:SF1">
    <property type="entry name" value="ATP SYNTHASE SUBUNIT B"/>
    <property type="match status" value="1"/>
</dbReference>
<dbReference type="PANTHER" id="PTHR33445">
    <property type="entry name" value="ATP SYNTHASE SUBUNIT B', CHLOROPLASTIC"/>
    <property type="match status" value="1"/>
</dbReference>
<dbReference type="Pfam" id="PF00430">
    <property type="entry name" value="ATP-synt_B"/>
    <property type="match status" value="1"/>
</dbReference>
<dbReference type="SUPFAM" id="SSF81573">
    <property type="entry name" value="F1F0 ATP synthase subunit B, membrane domain"/>
    <property type="match status" value="1"/>
</dbReference>
<organism>
    <name type="scientific">Shewanella frigidimarina (strain NCIMB 400)</name>
    <dbReference type="NCBI Taxonomy" id="318167"/>
    <lineage>
        <taxon>Bacteria</taxon>
        <taxon>Pseudomonadati</taxon>
        <taxon>Pseudomonadota</taxon>
        <taxon>Gammaproteobacteria</taxon>
        <taxon>Alteromonadales</taxon>
        <taxon>Shewanellaceae</taxon>
        <taxon>Shewanella</taxon>
    </lineage>
</organism>